<accession>A6WXS5</accession>
<name>RLMH_BRUA4</name>
<protein>
    <recommendedName>
        <fullName evidence="1">Ribosomal RNA large subunit methyltransferase H</fullName>
        <ecNumber evidence="1">2.1.1.177</ecNumber>
    </recommendedName>
    <alternativeName>
        <fullName evidence="1">23S rRNA (pseudouridine1915-N3)-methyltransferase</fullName>
    </alternativeName>
    <alternativeName>
        <fullName evidence="1">23S rRNA m3Psi1915 methyltransferase</fullName>
    </alternativeName>
    <alternativeName>
        <fullName evidence="1">rRNA (pseudouridine-N3-)-methyltransferase RlmH</fullName>
    </alternativeName>
</protein>
<feature type="chain" id="PRO_1000061814" description="Ribosomal RNA large subunit methyltransferase H">
    <location>
        <begin position="1"/>
        <end position="160"/>
    </location>
</feature>
<feature type="binding site" evidence="1">
    <location>
        <position position="76"/>
    </location>
    <ligand>
        <name>S-adenosyl-L-methionine</name>
        <dbReference type="ChEBI" id="CHEBI:59789"/>
    </ligand>
</feature>
<feature type="binding site" evidence="1">
    <location>
        <position position="108"/>
    </location>
    <ligand>
        <name>S-adenosyl-L-methionine</name>
        <dbReference type="ChEBI" id="CHEBI:59789"/>
    </ligand>
</feature>
<feature type="binding site" evidence="1">
    <location>
        <begin position="127"/>
        <end position="132"/>
    </location>
    <ligand>
        <name>S-adenosyl-L-methionine</name>
        <dbReference type="ChEBI" id="CHEBI:59789"/>
    </ligand>
</feature>
<sequence>MRVSVFAVGRMKAGPERELVERYFDRFSKAGPPLGLEFAGVSEIPESRGQTAELRKAEEAQRIHEALDNGAALILLDERGKALGSEAFADRIGRMRDDGKRQLIVAIGGPDGHDPALRTRADLVLALGELTWPHQIARILIAEQLYRAATILAGHPYHRS</sequence>
<reference key="1">
    <citation type="journal article" date="2011" name="J. Bacteriol.">
        <title>Genome of Ochrobactrum anthropi ATCC 49188 T, a versatile opportunistic pathogen and symbiont of several eukaryotic hosts.</title>
        <authorList>
            <person name="Chain P.S."/>
            <person name="Lang D.M."/>
            <person name="Comerci D.J."/>
            <person name="Malfatti S.A."/>
            <person name="Vergez L.M."/>
            <person name="Shin M."/>
            <person name="Ugalde R.A."/>
            <person name="Garcia E."/>
            <person name="Tolmasky M.E."/>
        </authorList>
    </citation>
    <scope>NUCLEOTIDE SEQUENCE [LARGE SCALE GENOMIC DNA]</scope>
    <source>
        <strain>ATCC 49188 / DSM 6882 / CCUG 24695 / JCM 21032 / LMG 3331 / NBRC 15819 / NCTC 12168 / Alc 37</strain>
    </source>
</reference>
<evidence type="ECO:0000255" key="1">
    <source>
        <dbReference type="HAMAP-Rule" id="MF_00658"/>
    </source>
</evidence>
<keyword id="KW-0963">Cytoplasm</keyword>
<keyword id="KW-0489">Methyltransferase</keyword>
<keyword id="KW-1185">Reference proteome</keyword>
<keyword id="KW-0698">rRNA processing</keyword>
<keyword id="KW-0949">S-adenosyl-L-methionine</keyword>
<keyword id="KW-0808">Transferase</keyword>
<comment type="function">
    <text evidence="1">Specifically methylates the pseudouridine at position 1915 (m3Psi1915) in 23S rRNA.</text>
</comment>
<comment type="catalytic activity">
    <reaction evidence="1">
        <text>pseudouridine(1915) in 23S rRNA + S-adenosyl-L-methionine = N(3)-methylpseudouridine(1915) in 23S rRNA + S-adenosyl-L-homocysteine + H(+)</text>
        <dbReference type="Rhea" id="RHEA:42752"/>
        <dbReference type="Rhea" id="RHEA-COMP:10221"/>
        <dbReference type="Rhea" id="RHEA-COMP:10222"/>
        <dbReference type="ChEBI" id="CHEBI:15378"/>
        <dbReference type="ChEBI" id="CHEBI:57856"/>
        <dbReference type="ChEBI" id="CHEBI:59789"/>
        <dbReference type="ChEBI" id="CHEBI:65314"/>
        <dbReference type="ChEBI" id="CHEBI:74486"/>
        <dbReference type="EC" id="2.1.1.177"/>
    </reaction>
</comment>
<comment type="subunit">
    <text evidence="1">Homodimer.</text>
</comment>
<comment type="subcellular location">
    <subcellularLocation>
        <location evidence="1">Cytoplasm</location>
    </subcellularLocation>
</comment>
<comment type="similarity">
    <text evidence="1">Belongs to the RNA methyltransferase RlmH family.</text>
</comment>
<proteinExistence type="inferred from homology"/>
<organism>
    <name type="scientific">Brucella anthropi (strain ATCC 49188 / DSM 6882 / CCUG 24695 / JCM 21032 / LMG 3331 / NBRC 15819 / NCTC 12168 / Alc 37)</name>
    <name type="common">Ochrobactrum anthropi</name>
    <dbReference type="NCBI Taxonomy" id="439375"/>
    <lineage>
        <taxon>Bacteria</taxon>
        <taxon>Pseudomonadati</taxon>
        <taxon>Pseudomonadota</taxon>
        <taxon>Alphaproteobacteria</taxon>
        <taxon>Hyphomicrobiales</taxon>
        <taxon>Brucellaceae</taxon>
        <taxon>Brucella/Ochrobactrum group</taxon>
        <taxon>Brucella</taxon>
    </lineage>
</organism>
<dbReference type="EC" id="2.1.1.177" evidence="1"/>
<dbReference type="EMBL" id="CP000758">
    <property type="protein sequence ID" value="ABS13779.1"/>
    <property type="molecule type" value="Genomic_DNA"/>
</dbReference>
<dbReference type="RefSeq" id="WP_012091227.1">
    <property type="nucleotide sequence ID" value="NC_009667.1"/>
</dbReference>
<dbReference type="SMR" id="A6WXS5"/>
<dbReference type="STRING" id="439375.Oant_1059"/>
<dbReference type="KEGG" id="oan:Oant_1059"/>
<dbReference type="PATRIC" id="fig|439375.7.peg.1108"/>
<dbReference type="eggNOG" id="COG1576">
    <property type="taxonomic scope" value="Bacteria"/>
</dbReference>
<dbReference type="HOGENOM" id="CLU_100552_1_1_5"/>
<dbReference type="PhylomeDB" id="A6WXS5"/>
<dbReference type="Proteomes" id="UP000002301">
    <property type="component" value="Chromosome 1"/>
</dbReference>
<dbReference type="GO" id="GO:0005737">
    <property type="term" value="C:cytoplasm"/>
    <property type="evidence" value="ECO:0007669"/>
    <property type="project" value="UniProtKB-SubCell"/>
</dbReference>
<dbReference type="GO" id="GO:0070038">
    <property type="term" value="F:rRNA (pseudouridine-N3-)-methyltransferase activity"/>
    <property type="evidence" value="ECO:0007669"/>
    <property type="project" value="UniProtKB-UniRule"/>
</dbReference>
<dbReference type="CDD" id="cd18081">
    <property type="entry name" value="RlmH-like"/>
    <property type="match status" value="1"/>
</dbReference>
<dbReference type="Gene3D" id="3.40.1280.10">
    <property type="match status" value="1"/>
</dbReference>
<dbReference type="HAMAP" id="MF_00658">
    <property type="entry name" value="23SrRNA_methyltr_H"/>
    <property type="match status" value="1"/>
</dbReference>
<dbReference type="InterPro" id="IPR029028">
    <property type="entry name" value="Alpha/beta_knot_MTases"/>
</dbReference>
<dbReference type="InterPro" id="IPR003742">
    <property type="entry name" value="RlmH-like"/>
</dbReference>
<dbReference type="InterPro" id="IPR029026">
    <property type="entry name" value="tRNA_m1G_MTases_N"/>
</dbReference>
<dbReference type="NCBIfam" id="NF000989">
    <property type="entry name" value="PRK00103.2-3"/>
    <property type="match status" value="1"/>
</dbReference>
<dbReference type="PANTHER" id="PTHR33603">
    <property type="entry name" value="METHYLTRANSFERASE"/>
    <property type="match status" value="1"/>
</dbReference>
<dbReference type="PANTHER" id="PTHR33603:SF1">
    <property type="entry name" value="RIBOSOMAL RNA LARGE SUBUNIT METHYLTRANSFERASE H"/>
    <property type="match status" value="1"/>
</dbReference>
<dbReference type="Pfam" id="PF02590">
    <property type="entry name" value="SPOUT_MTase"/>
    <property type="match status" value="1"/>
</dbReference>
<dbReference type="PIRSF" id="PIRSF004505">
    <property type="entry name" value="MT_bac"/>
    <property type="match status" value="1"/>
</dbReference>
<dbReference type="SUPFAM" id="SSF75217">
    <property type="entry name" value="alpha/beta knot"/>
    <property type="match status" value="1"/>
</dbReference>
<gene>
    <name evidence="1" type="primary">rlmH</name>
    <name type="ordered locus">Oant_1059</name>
</gene>